<geneLocation type="chloroplast"/>
<reference key="1">
    <citation type="journal article" date="1986" name="Curr. Genet.">
        <title>Nucleotide sequence of the clustered genes for two P700 chlorophyll a apoproteins of the photosystem I reaction center and the ribosomal protein S14 of the spinach plastid chromosome.</title>
        <authorList>
            <person name="Kirsch W."/>
            <person name="Seyer P."/>
            <person name="Herrmann R.G."/>
        </authorList>
    </citation>
    <scope>NUCLEOTIDE SEQUENCE [GENOMIC DNA]</scope>
</reference>
<reference key="2">
    <citation type="journal article" date="2001" name="Plant Mol. Biol.">
        <title>The plastid chromosome of spinach (Spinacia oleracea): complete nucleotide sequence and gene organization.</title>
        <authorList>
            <person name="Schmitz-Linneweber C."/>
            <person name="Maier R.M."/>
            <person name="Alcaraz J.-P."/>
            <person name="Cottet A."/>
            <person name="Herrmann R.G."/>
            <person name="Mache R."/>
        </authorList>
    </citation>
    <scope>NUCLEOTIDE SEQUENCE [LARGE SCALE GENOMIC DNA]</scope>
    <source>
        <strain>cv. Geant d'hiver</strain>
        <strain>cv. Monatol</strain>
    </source>
</reference>
<reference key="3">
    <citation type="journal article" date="2000" name="J. Biol. Chem.">
        <title>The plastid ribosomal proteins. Identification of all the proteins in the 30S subunit of an organelle ribosome (chloroplast).</title>
        <authorList>
            <person name="Yamaguchi K."/>
            <person name="von Knoblauch K."/>
            <person name="Subramanian A.R."/>
        </authorList>
    </citation>
    <scope>PROTEIN SEQUENCE OF 2-13</scope>
    <scope>SUBUNIT</scope>
    <scope>SUBCELLULAR LOCATION</scope>
    <scope>MASS SPECTROMETRY</scope>
    <source>
        <strain>cv. Alwaro</strain>
        <tissue>Leaf</tissue>
    </source>
</reference>
<reference key="4">
    <citation type="journal article" date="2007" name="Proc. Natl. Acad. Sci. U.S.A.">
        <title>Cryo-EM study of the spinach chloroplast ribosome reveals the structural and functional roles of plastid-specific ribosomal proteins.</title>
        <authorList>
            <person name="Sharma M.R."/>
            <person name="Wilson D.N."/>
            <person name="Datta P.P."/>
            <person name="Barat C."/>
            <person name="Schluenzen F."/>
            <person name="Fucini P."/>
            <person name="Agrawal R.K."/>
        </authorList>
    </citation>
    <scope>STRUCTURE BY ELECTRON MICROSCOPY (9.4 ANGSTROMS)</scope>
</reference>
<reference key="5">
    <citation type="journal article" date="2017" name="EMBO J.">
        <title>The complete structure of the chloroplast 70S ribosome in complex with translation factor pY.</title>
        <authorList>
            <person name="Bieri P."/>
            <person name="Leibundgut M."/>
            <person name="Saurer M."/>
            <person name="Boehringer D."/>
            <person name="Ban N."/>
        </authorList>
    </citation>
    <scope>STRUCTURE BY ELECTRON MICROSCOPY (3.40 ANGSTROMS)</scope>
    <scope>SUBUNIT</scope>
    <scope>SUBCELLULAR LOCATION</scope>
</reference>
<name>RR14_SPIOL</name>
<protein>
    <recommendedName>
        <fullName evidence="5">Small ribosomal subunit protein uS14c</fullName>
    </recommendedName>
    <alternativeName>
        <fullName evidence="1 4">30S ribosomal protein S14, chloroplastic</fullName>
    </alternativeName>
</protein>
<dbReference type="EMBL" id="AJ400848">
    <property type="protein sequence ID" value="CAB88724.1"/>
    <property type="molecule type" value="Genomic_DNA"/>
</dbReference>
<dbReference type="PIR" id="S00455">
    <property type="entry name" value="R3SP14"/>
</dbReference>
<dbReference type="RefSeq" id="NP_054931.1">
    <property type="nucleotide sequence ID" value="NC_002202.1"/>
</dbReference>
<dbReference type="PDB" id="4V61">
    <property type="method" value="EM"/>
    <property type="resolution" value="9.40 A"/>
    <property type="chains" value="AN=1-100"/>
</dbReference>
<dbReference type="PDB" id="5MMJ">
    <property type="method" value="EM"/>
    <property type="resolution" value="3.65 A"/>
    <property type="chains" value="n=1-100"/>
</dbReference>
<dbReference type="PDB" id="5MMM">
    <property type="method" value="EM"/>
    <property type="resolution" value="3.40 A"/>
    <property type="chains" value="n=1-100"/>
</dbReference>
<dbReference type="PDB" id="5X8P">
    <property type="method" value="EM"/>
    <property type="resolution" value="3.40 A"/>
    <property type="chains" value="n=1-100"/>
</dbReference>
<dbReference type="PDB" id="5X8R">
    <property type="method" value="EM"/>
    <property type="resolution" value="3.70 A"/>
    <property type="chains" value="n=1-100"/>
</dbReference>
<dbReference type="PDB" id="6ERI">
    <property type="method" value="EM"/>
    <property type="resolution" value="3.00 A"/>
    <property type="chains" value="BN=2-100"/>
</dbReference>
<dbReference type="PDBsum" id="4V61"/>
<dbReference type="PDBsum" id="5MMJ"/>
<dbReference type="PDBsum" id="5MMM"/>
<dbReference type="PDBsum" id="5X8P"/>
<dbReference type="PDBsum" id="5X8R"/>
<dbReference type="PDBsum" id="6ERI"/>
<dbReference type="EMDB" id="EMD-3532"/>
<dbReference type="EMDB" id="EMD-3533"/>
<dbReference type="EMDB" id="EMD-3941"/>
<dbReference type="EMDB" id="EMD-6709"/>
<dbReference type="EMDB" id="EMD-6710"/>
<dbReference type="SMR" id="P06507"/>
<dbReference type="FunCoup" id="P06507">
    <property type="interactions" value="39"/>
</dbReference>
<dbReference type="STRING" id="3562.P06507"/>
<dbReference type="GeneID" id="2715637"/>
<dbReference type="KEGG" id="soe:2715637"/>
<dbReference type="InParanoid" id="P06507"/>
<dbReference type="OrthoDB" id="413436at2759"/>
<dbReference type="Proteomes" id="UP001155700">
    <property type="component" value="Chloroplast Pltd"/>
</dbReference>
<dbReference type="GO" id="GO:0009507">
    <property type="term" value="C:chloroplast"/>
    <property type="evidence" value="ECO:0007669"/>
    <property type="project" value="UniProtKB-SubCell"/>
</dbReference>
<dbReference type="GO" id="GO:0015935">
    <property type="term" value="C:small ribosomal subunit"/>
    <property type="evidence" value="ECO:0000318"/>
    <property type="project" value="GO_Central"/>
</dbReference>
<dbReference type="GO" id="GO:0019843">
    <property type="term" value="F:rRNA binding"/>
    <property type="evidence" value="ECO:0007669"/>
    <property type="project" value="UniProtKB-UniRule"/>
</dbReference>
<dbReference type="GO" id="GO:0003735">
    <property type="term" value="F:structural constituent of ribosome"/>
    <property type="evidence" value="ECO:0000318"/>
    <property type="project" value="GO_Central"/>
</dbReference>
<dbReference type="GO" id="GO:0006412">
    <property type="term" value="P:translation"/>
    <property type="evidence" value="ECO:0000318"/>
    <property type="project" value="GO_Central"/>
</dbReference>
<dbReference type="FunFam" id="1.10.287.1480:FF:000001">
    <property type="entry name" value="30S ribosomal protein S14"/>
    <property type="match status" value="1"/>
</dbReference>
<dbReference type="Gene3D" id="1.10.287.1480">
    <property type="match status" value="1"/>
</dbReference>
<dbReference type="HAMAP" id="MF_00537">
    <property type="entry name" value="Ribosomal_uS14_1"/>
    <property type="match status" value="1"/>
</dbReference>
<dbReference type="InterPro" id="IPR001209">
    <property type="entry name" value="Ribosomal_uS14"/>
</dbReference>
<dbReference type="InterPro" id="IPR023036">
    <property type="entry name" value="Ribosomal_uS14_bac/plastid"/>
</dbReference>
<dbReference type="InterPro" id="IPR018271">
    <property type="entry name" value="Ribosomal_uS14_CS"/>
</dbReference>
<dbReference type="NCBIfam" id="NF006477">
    <property type="entry name" value="PRK08881.1"/>
    <property type="match status" value="1"/>
</dbReference>
<dbReference type="PANTHER" id="PTHR19836">
    <property type="entry name" value="30S RIBOSOMAL PROTEIN S14"/>
    <property type="match status" value="1"/>
</dbReference>
<dbReference type="PANTHER" id="PTHR19836:SF19">
    <property type="entry name" value="SMALL RIBOSOMAL SUBUNIT PROTEIN US14M"/>
    <property type="match status" value="1"/>
</dbReference>
<dbReference type="Pfam" id="PF00253">
    <property type="entry name" value="Ribosomal_S14"/>
    <property type="match status" value="1"/>
</dbReference>
<dbReference type="SUPFAM" id="SSF57716">
    <property type="entry name" value="Glucocorticoid receptor-like (DNA-binding domain)"/>
    <property type="match status" value="1"/>
</dbReference>
<dbReference type="PROSITE" id="PS00527">
    <property type="entry name" value="RIBOSOMAL_S14"/>
    <property type="match status" value="1"/>
</dbReference>
<gene>
    <name evidence="1" type="primary">rps14</name>
</gene>
<evidence type="ECO:0000255" key="1">
    <source>
        <dbReference type="HAMAP-Rule" id="MF_00537"/>
    </source>
</evidence>
<evidence type="ECO:0000269" key="2">
    <source>
    </source>
</evidence>
<evidence type="ECO:0000269" key="3">
    <source>
    </source>
</evidence>
<evidence type="ECO:0000303" key="4">
    <source>
    </source>
</evidence>
<evidence type="ECO:0000303" key="5">
    <source>
    </source>
</evidence>
<evidence type="ECO:0000305" key="6">
    <source>
    </source>
</evidence>
<evidence type="ECO:0000305" key="7">
    <source>
    </source>
</evidence>
<keyword id="KW-0002">3D-structure</keyword>
<keyword id="KW-0150">Chloroplast</keyword>
<keyword id="KW-0903">Direct protein sequencing</keyword>
<keyword id="KW-0934">Plastid</keyword>
<keyword id="KW-1185">Reference proteome</keyword>
<keyword id="KW-0687">Ribonucleoprotein</keyword>
<keyword id="KW-0689">Ribosomal protein</keyword>
<keyword id="KW-0694">RNA-binding</keyword>
<keyword id="KW-0699">rRNA-binding</keyword>
<feature type="initiator methionine" description="Removed" evidence="2">
    <location>
        <position position="1"/>
    </location>
</feature>
<feature type="chain" id="PRO_0000130985" description="Small ribosomal subunit protein uS14c">
    <location>
        <begin position="2"/>
        <end position="100"/>
    </location>
</feature>
<organism>
    <name type="scientific">Spinacia oleracea</name>
    <name type="common">Spinach</name>
    <dbReference type="NCBI Taxonomy" id="3562"/>
    <lineage>
        <taxon>Eukaryota</taxon>
        <taxon>Viridiplantae</taxon>
        <taxon>Streptophyta</taxon>
        <taxon>Embryophyta</taxon>
        <taxon>Tracheophyta</taxon>
        <taxon>Spermatophyta</taxon>
        <taxon>Magnoliopsida</taxon>
        <taxon>eudicotyledons</taxon>
        <taxon>Gunneridae</taxon>
        <taxon>Pentapetalae</taxon>
        <taxon>Caryophyllales</taxon>
        <taxon>Chenopodiaceae</taxon>
        <taxon>Chenopodioideae</taxon>
        <taxon>Anserineae</taxon>
        <taxon>Spinacia</taxon>
    </lineage>
</organism>
<comment type="function">
    <text evidence="6 7">Component of the chloroplast ribosome (chloro-ribosome), a dedicated translation machinery responsible for the synthesis of chloroplast genome-encoded proteins, including proteins of the transcription and translation machinery and components of the photosynthetic apparatus.</text>
</comment>
<comment type="subunit">
    <text evidence="2 3">Component of the chloroplast small ribosomal subunit (SSU). Mature 70S chloroplast ribosomes of higher plants consist of a small (30S) and a large (50S) subunit. The 30S small subunit contains 1 molecule of ribosomal RNA (16S rRNA) and 24 different proteins. The 50S large subunit contains 3 rRNA molecules (23S, 5S and 4.5S rRNA) and 33 different proteins.</text>
</comment>
<comment type="subcellular location">
    <subcellularLocation>
        <location evidence="1 2 3">Plastid</location>
        <location evidence="1 2 3">Chloroplast</location>
    </subcellularLocation>
</comment>
<comment type="mass spectrometry"/>
<comment type="mass spectrometry"/>
<comment type="miscellaneous">
    <text evidence="2">Two forms, which differ in pI, are produced, S14 alpha and S14 beta.</text>
</comment>
<comment type="similarity">
    <text evidence="1">Belongs to the universal ribosomal protein uS14 family.</text>
</comment>
<proteinExistence type="evidence at protein level"/>
<accession>P06507</accession>
<accession>P82164</accession>
<sequence>MARKSLIQREKKRRNLEQKYHLIRRSSKQEIRKVTSLSDKWEIHGKLQSPPRNSAPARLHRRCFLTGRPRANIRDFGLSGHILREMVHTCLLPGATRSSW</sequence>